<accession>A0R618</accession>
<accession>I7GFQ6</accession>
<evidence type="ECO:0000250" key="1">
    <source>
        <dbReference type="UniProtKB" id="O53580"/>
    </source>
</evidence>
<evidence type="ECO:0000269" key="2">
    <source>
    </source>
</evidence>
<evidence type="ECO:0000269" key="3">
    <source>
    </source>
</evidence>
<evidence type="ECO:0000269" key="4">
    <source>
    </source>
</evidence>
<evidence type="ECO:0000305" key="5"/>
<evidence type="ECO:0000312" key="6">
    <source>
        <dbReference type="EMBL" id="ABK74035.1"/>
    </source>
</evidence>
<evidence type="ECO:0000312" key="7">
    <source>
        <dbReference type="EMBL" id="AFP42651.1"/>
    </source>
</evidence>
<evidence type="ECO:0007744" key="8">
    <source>
        <dbReference type="PDB" id="5D6J"/>
    </source>
</evidence>
<evidence type="ECO:0007744" key="9">
    <source>
        <dbReference type="PDB" id="5D6N"/>
    </source>
</evidence>
<evidence type="ECO:0007744" key="10">
    <source>
        <dbReference type="PDB" id="5EY8"/>
    </source>
</evidence>
<evidence type="ECO:0007744" key="11">
    <source>
        <dbReference type="PDB" id="5ICR"/>
    </source>
</evidence>
<evidence type="ECO:0007829" key="12">
    <source>
        <dbReference type="PDB" id="5D6J"/>
    </source>
</evidence>
<evidence type="ECO:0007829" key="13">
    <source>
        <dbReference type="PDB" id="5D6N"/>
    </source>
</evidence>
<evidence type="ECO:0007829" key="14">
    <source>
        <dbReference type="PDB" id="5EY8"/>
    </source>
</evidence>
<evidence type="ECO:0007829" key="15">
    <source>
        <dbReference type="PDB" id="5ICR"/>
    </source>
</evidence>
<organism>
    <name type="scientific">Mycolicibacterium smegmatis (strain ATCC 700084 / mc(2)155)</name>
    <name type="common">Mycobacterium smegmatis</name>
    <dbReference type="NCBI Taxonomy" id="246196"/>
    <lineage>
        <taxon>Bacteria</taxon>
        <taxon>Bacillati</taxon>
        <taxon>Actinomycetota</taxon>
        <taxon>Actinomycetes</taxon>
        <taxon>Mycobacteriales</taxon>
        <taxon>Mycobacteriaceae</taxon>
        <taxon>Mycolicibacterium</taxon>
    </lineage>
</organism>
<feature type="chain" id="PRO_0000451463" description="Long-chain-fatty-acid--AMP ligase FadD32">
    <location>
        <begin position="1"/>
        <end position="630"/>
    </location>
</feature>
<feature type="binding site" evidence="3 8">
    <location>
        <begin position="187"/>
        <end position="192"/>
    </location>
    <ligand>
        <name>ATP</name>
        <dbReference type="ChEBI" id="CHEBI:30616"/>
    </ligand>
</feature>
<feature type="binding site" evidence="3 8">
    <location>
        <position position="342"/>
    </location>
    <ligand>
        <name>ATP</name>
        <dbReference type="ChEBI" id="CHEBI:30616"/>
    </ligand>
</feature>
<feature type="binding site" evidence="3 8">
    <location>
        <position position="346"/>
    </location>
    <ligand>
        <name>ATP</name>
        <dbReference type="ChEBI" id="CHEBI:30616"/>
    </ligand>
</feature>
<feature type="binding site" evidence="3 8">
    <location>
        <position position="469"/>
    </location>
    <ligand>
        <name>ATP</name>
        <dbReference type="ChEBI" id="CHEBI:30616"/>
    </ligand>
</feature>
<feature type="binding site" evidence="3 8">
    <location>
        <position position="483"/>
    </location>
    <ligand>
        <name>ATP</name>
        <dbReference type="ChEBI" id="CHEBI:30616"/>
    </ligand>
</feature>
<feature type="strand" evidence="15">
    <location>
        <begin position="9"/>
        <end position="13"/>
    </location>
</feature>
<feature type="helix" evidence="12">
    <location>
        <begin position="21"/>
        <end position="31"/>
    </location>
</feature>
<feature type="strand" evidence="12">
    <location>
        <begin position="35"/>
        <end position="42"/>
    </location>
</feature>
<feature type="strand" evidence="14">
    <location>
        <begin position="44"/>
        <end position="48"/>
    </location>
</feature>
<feature type="strand" evidence="12">
    <location>
        <begin position="50"/>
        <end position="55"/>
    </location>
</feature>
<feature type="helix" evidence="12">
    <location>
        <begin position="56"/>
        <end position="73"/>
    </location>
</feature>
<feature type="strand" evidence="12">
    <location>
        <begin position="79"/>
        <end position="82"/>
    </location>
</feature>
<feature type="helix" evidence="12">
    <location>
        <begin position="88"/>
        <end position="99"/>
    </location>
</feature>
<feature type="strand" evidence="12">
    <location>
        <begin position="103"/>
        <end position="106"/>
    </location>
</feature>
<feature type="strand" evidence="12">
    <location>
        <begin position="112"/>
        <end position="114"/>
    </location>
</feature>
<feature type="helix" evidence="12">
    <location>
        <begin position="116"/>
        <end position="126"/>
    </location>
</feature>
<feature type="strand" evidence="12">
    <location>
        <begin position="129"/>
        <end position="133"/>
    </location>
</feature>
<feature type="turn" evidence="12">
    <location>
        <begin position="135"/>
        <end position="137"/>
    </location>
</feature>
<feature type="helix" evidence="12">
    <location>
        <begin position="138"/>
        <end position="145"/>
    </location>
</feature>
<feature type="helix" evidence="12">
    <location>
        <begin position="150"/>
        <end position="152"/>
    </location>
</feature>
<feature type="strand" evidence="12">
    <location>
        <begin position="155"/>
        <end position="158"/>
    </location>
</feature>
<feature type="helix" evidence="12">
    <location>
        <begin position="159"/>
        <end position="161"/>
    </location>
</feature>
<feature type="helix" evidence="12">
    <location>
        <begin position="164"/>
        <end position="169"/>
    </location>
</feature>
<feature type="strand" evidence="12">
    <location>
        <begin position="181"/>
        <end position="186"/>
    </location>
</feature>
<feature type="strand" evidence="12">
    <location>
        <begin position="190"/>
        <end position="193"/>
    </location>
</feature>
<feature type="strand" evidence="12">
    <location>
        <begin position="196"/>
        <end position="200"/>
    </location>
</feature>
<feature type="helix" evidence="12">
    <location>
        <begin position="201"/>
        <end position="215"/>
    </location>
</feature>
<feature type="strand" evidence="12">
    <location>
        <begin position="223"/>
        <end position="225"/>
    </location>
</feature>
<feature type="strand" evidence="13">
    <location>
        <begin position="229"/>
        <end position="231"/>
    </location>
</feature>
<feature type="helix" evidence="12">
    <location>
        <begin position="232"/>
        <end position="238"/>
    </location>
</feature>
<feature type="helix" evidence="12">
    <location>
        <begin position="241"/>
        <end position="244"/>
    </location>
</feature>
<feature type="strand" evidence="12">
    <location>
        <begin position="248"/>
        <end position="250"/>
    </location>
</feature>
<feature type="helix" evidence="12">
    <location>
        <begin position="253"/>
        <end position="258"/>
    </location>
</feature>
<feature type="helix" evidence="12">
    <location>
        <begin position="261"/>
        <end position="267"/>
    </location>
</feature>
<feature type="strand" evidence="12">
    <location>
        <begin position="278"/>
        <end position="280"/>
    </location>
</feature>
<feature type="helix" evidence="12">
    <location>
        <begin position="283"/>
        <end position="292"/>
    </location>
</feature>
<feature type="strand" evidence="12">
    <location>
        <begin position="309"/>
        <end position="312"/>
    </location>
</feature>
<feature type="helix" evidence="12">
    <location>
        <begin position="319"/>
        <end position="329"/>
    </location>
</feature>
<feature type="helix" evidence="12">
    <location>
        <begin position="330"/>
        <end position="332"/>
    </location>
</feature>
<feature type="helix" evidence="12">
    <location>
        <begin position="336"/>
        <end position="338"/>
    </location>
</feature>
<feature type="strand" evidence="12">
    <location>
        <begin position="339"/>
        <end position="344"/>
    </location>
</feature>
<feature type="helix" evidence="12">
    <location>
        <begin position="346"/>
        <end position="348"/>
    </location>
</feature>
<feature type="strand" evidence="12">
    <location>
        <begin position="349"/>
        <end position="354"/>
    </location>
</feature>
<feature type="strand" evidence="14">
    <location>
        <begin position="357"/>
        <end position="359"/>
    </location>
</feature>
<feature type="strand" evidence="12">
    <location>
        <begin position="363"/>
        <end position="367"/>
    </location>
</feature>
<feature type="helix" evidence="12">
    <location>
        <begin position="368"/>
        <end position="372"/>
    </location>
</feature>
<feature type="strand" evidence="14">
    <location>
        <begin position="383"/>
        <end position="385"/>
    </location>
</feature>
<feature type="strand" evidence="12">
    <location>
        <begin position="386"/>
        <end position="391"/>
    </location>
</feature>
<feature type="strand" evidence="12">
    <location>
        <begin position="399"/>
        <end position="405"/>
    </location>
</feature>
<feature type="turn" evidence="12">
    <location>
        <begin position="406"/>
        <end position="409"/>
    </location>
</feature>
<feature type="strand" evidence="12">
    <location>
        <begin position="418"/>
        <end position="424"/>
    </location>
</feature>
<feature type="helix" evidence="12">
    <location>
        <begin position="435"/>
        <end position="442"/>
    </location>
</feature>
<feature type="turn" evidence="12">
    <location>
        <begin position="454"/>
        <end position="457"/>
    </location>
</feature>
<feature type="strand" evidence="12">
    <location>
        <begin position="464"/>
        <end position="474"/>
    </location>
</feature>
<feature type="strand" evidence="12">
    <location>
        <begin position="477"/>
        <end position="483"/>
    </location>
</feature>
<feature type="helix" evidence="12">
    <location>
        <begin position="484"/>
        <end position="486"/>
    </location>
</feature>
<feature type="strand" evidence="12">
    <location>
        <begin position="488"/>
        <end position="490"/>
    </location>
</feature>
<feature type="strand" evidence="12">
    <location>
        <begin position="493"/>
        <end position="495"/>
    </location>
</feature>
<feature type="helix" evidence="12">
    <location>
        <begin position="497"/>
        <end position="507"/>
    </location>
</feature>
<feature type="strand" evidence="12">
    <location>
        <begin position="515"/>
        <end position="522"/>
    </location>
</feature>
<feature type="helix" evidence="12">
    <location>
        <begin position="523"/>
        <end position="525"/>
    </location>
</feature>
<feature type="helix" evidence="12">
    <location>
        <begin position="528"/>
        <end position="532"/>
    </location>
</feature>
<feature type="helix" evidence="12">
    <location>
        <begin position="534"/>
        <end position="536"/>
    </location>
</feature>
<feature type="strand" evidence="12">
    <location>
        <begin position="547"/>
        <end position="554"/>
    </location>
</feature>
<feature type="strand" evidence="12">
    <location>
        <begin position="557"/>
        <end position="559"/>
    </location>
</feature>
<feature type="helix" evidence="12">
    <location>
        <begin position="564"/>
        <end position="579"/>
    </location>
</feature>
<feature type="strand" evidence="12">
    <location>
        <begin position="583"/>
        <end position="589"/>
    </location>
</feature>
<feature type="strand" evidence="12">
    <location>
        <begin position="598"/>
        <end position="600"/>
    </location>
</feature>
<feature type="helix" evidence="12">
    <location>
        <begin position="604"/>
        <end position="611"/>
    </location>
</feature>
<feature type="turn" evidence="12">
    <location>
        <begin position="612"/>
        <end position="614"/>
    </location>
</feature>
<feature type="helix" evidence="12">
    <location>
        <begin position="615"/>
        <end position="618"/>
    </location>
</feature>
<name>FAA32_MYCS2</name>
<proteinExistence type="evidence at protein level"/>
<keyword id="KW-0002">3D-structure</keyword>
<keyword id="KW-0067">ATP-binding</keyword>
<keyword id="KW-0276">Fatty acid metabolism</keyword>
<keyword id="KW-0436">Ligase</keyword>
<keyword id="KW-0443">Lipid metabolism</keyword>
<keyword id="KW-0547">Nucleotide-binding</keyword>
<keyword id="KW-1185">Reference proteome</keyword>
<sequence>MPFHNPFIKDGQIKFPDGSSIVAHVERWAKVRGDKLAYRFLDFSTERDGVPRDLTWAQFSARNRAVAARLQQVTQPGDRVAILCPQNLDYLVAFFGALYAGRIAVPLFDPSEPGHVGRLHAVLDNCHPSAILTTTEAAEGVRKFFRTRPANQRPRVIAVDAVPDDVASTWVNPDEPDETTIAYLQYTSGSTRIPTGVQITHLNLATNVVQVIEALEGEEGDRGLSWLPFFHDMGLITALLAPMIGHYFTFMTPAAFVRRPERWIRELARKEGDTGGTISVAPNFAFDHAAARGVPKPGSPPLDLSNVKAVLNGSEPISAATVRRFNEAFGPFGFPPKAIKPSYGLAEATLFVSTTPSAEEPKIITVDRDQLNSGRIVEVDADSPKAVAQASAGKVGIAEWAVIVDAESATELPDGQVGEIWISGQNMGTGYWGKPEESVATFQNILKSRTNPSHAEGATDDATWVRTGDYGAFYDGDLYITGRVKDLVIIDGRNHYPQDLEYSAQEASKAIRTGYVAAFSVPANQLPDEVFENAHSGIKRDPDDTSEQLVIVAERAPGAHKLDIGPITDDIRAAIAVRHGVTVRDVLLTAAGAIPRTSSGKIGRRACRAAYLDGSLRAGKVANDFPDATD</sequence>
<gene>
    <name evidence="7" type="primary">fadD32</name>
    <name evidence="6" type="ordered locus">MSMEG_6393</name>
    <name evidence="7" type="ordered locus">MSMEI_6225</name>
</gene>
<dbReference type="EC" id="6.2.1.20" evidence="1"/>
<dbReference type="EMBL" id="CP000480">
    <property type="protein sequence ID" value="ABK74035.1"/>
    <property type="molecule type" value="Genomic_DNA"/>
</dbReference>
<dbReference type="EMBL" id="CP001663">
    <property type="protein sequence ID" value="AFP42651.1"/>
    <property type="molecule type" value="Genomic_DNA"/>
</dbReference>
<dbReference type="RefSeq" id="WP_011731257.1">
    <property type="nucleotide sequence ID" value="NZ_SIJM01000013.1"/>
</dbReference>
<dbReference type="RefSeq" id="YP_890606.1">
    <property type="nucleotide sequence ID" value="NC_008596.1"/>
</dbReference>
<dbReference type="PDB" id="5D6J">
    <property type="method" value="X-ray"/>
    <property type="resolution" value="2.25 A"/>
    <property type="chains" value="A=1-630"/>
</dbReference>
<dbReference type="PDB" id="5D6N">
    <property type="method" value="X-ray"/>
    <property type="resolution" value="2.40 A"/>
    <property type="chains" value="A=1-484"/>
</dbReference>
<dbReference type="PDB" id="5EY8">
    <property type="method" value="X-ray"/>
    <property type="resolution" value="3.50 A"/>
    <property type="chains" value="A/B/C/D/E/F/G/H=1-630"/>
</dbReference>
<dbReference type="PDB" id="5ICR">
    <property type="method" value="X-ray"/>
    <property type="resolution" value="2.25 A"/>
    <property type="chains" value="A/B/C/D=1-630"/>
</dbReference>
<dbReference type="PDBsum" id="5D6J"/>
<dbReference type="PDBsum" id="5D6N"/>
<dbReference type="PDBsum" id="5EY8"/>
<dbReference type="PDBsum" id="5ICR"/>
<dbReference type="SMR" id="A0R618"/>
<dbReference type="STRING" id="246196.MSMEG_6393"/>
<dbReference type="PaxDb" id="246196-MSMEI_6225"/>
<dbReference type="GeneID" id="93461006"/>
<dbReference type="KEGG" id="msb:LJ00_31600"/>
<dbReference type="KEGG" id="msg:MSMEI_6225"/>
<dbReference type="KEGG" id="msm:MSMEG_6393"/>
<dbReference type="PATRIC" id="fig|246196.19.peg.6220"/>
<dbReference type="eggNOG" id="COG0318">
    <property type="taxonomic scope" value="Bacteria"/>
</dbReference>
<dbReference type="OrthoDB" id="3671040at2"/>
<dbReference type="UniPathway" id="UPA00915"/>
<dbReference type="EvolutionaryTrace" id="A0R618"/>
<dbReference type="Proteomes" id="UP000000757">
    <property type="component" value="Chromosome"/>
</dbReference>
<dbReference type="Proteomes" id="UP000006158">
    <property type="component" value="Chromosome"/>
</dbReference>
<dbReference type="GO" id="GO:0005886">
    <property type="term" value="C:plasma membrane"/>
    <property type="evidence" value="ECO:0007669"/>
    <property type="project" value="TreeGrafter"/>
</dbReference>
<dbReference type="GO" id="GO:0070566">
    <property type="term" value="F:adenylyltransferase activity"/>
    <property type="evidence" value="ECO:0007669"/>
    <property type="project" value="TreeGrafter"/>
</dbReference>
<dbReference type="GO" id="GO:0005524">
    <property type="term" value="F:ATP binding"/>
    <property type="evidence" value="ECO:0007669"/>
    <property type="project" value="UniProtKB-KW"/>
</dbReference>
<dbReference type="GO" id="GO:0008922">
    <property type="term" value="F:long-chain fatty acid [acyl-carrier-protein] ligase activity"/>
    <property type="evidence" value="ECO:0007669"/>
    <property type="project" value="UniProtKB-EC"/>
</dbReference>
<dbReference type="GO" id="GO:0006633">
    <property type="term" value="P:fatty acid biosynthetic process"/>
    <property type="evidence" value="ECO:0007669"/>
    <property type="project" value="TreeGrafter"/>
</dbReference>
<dbReference type="CDD" id="cd05931">
    <property type="entry name" value="FAAL"/>
    <property type="match status" value="1"/>
</dbReference>
<dbReference type="FunFam" id="3.30.300.30:FF:000029">
    <property type="entry name" value="Fatty-acid-CoA ligase FadD31"/>
    <property type="match status" value="1"/>
</dbReference>
<dbReference type="FunFam" id="3.40.50.12780:FF:000013">
    <property type="entry name" value="Long-chain-fatty-acid--AMP ligase FadD32"/>
    <property type="match status" value="1"/>
</dbReference>
<dbReference type="Gene3D" id="3.30.300.30">
    <property type="match status" value="1"/>
</dbReference>
<dbReference type="Gene3D" id="3.40.50.12780">
    <property type="entry name" value="N-terminal domain of ligase-like"/>
    <property type="match status" value="1"/>
</dbReference>
<dbReference type="InterPro" id="IPR045851">
    <property type="entry name" value="AMP-bd_C_sf"/>
</dbReference>
<dbReference type="InterPro" id="IPR000873">
    <property type="entry name" value="AMP-dep_synth/lig_dom"/>
</dbReference>
<dbReference type="InterPro" id="IPR042099">
    <property type="entry name" value="ANL_N_sf"/>
</dbReference>
<dbReference type="InterPro" id="IPR040097">
    <property type="entry name" value="FAAL/FAAC"/>
</dbReference>
<dbReference type="InterPro" id="IPR047968">
    <property type="entry name" value="FAAL_FadD32"/>
</dbReference>
<dbReference type="NCBIfam" id="NF038339">
    <property type="entry name" value="FAAL_FadD32"/>
    <property type="match status" value="1"/>
</dbReference>
<dbReference type="PANTHER" id="PTHR22754:SF32">
    <property type="entry name" value="DISCO-INTERACTING PROTEIN 2"/>
    <property type="match status" value="1"/>
</dbReference>
<dbReference type="PANTHER" id="PTHR22754">
    <property type="entry name" value="DISCO-INTERACTING PROTEIN 2 DIP2 -RELATED"/>
    <property type="match status" value="1"/>
</dbReference>
<dbReference type="Pfam" id="PF00501">
    <property type="entry name" value="AMP-binding"/>
    <property type="match status" value="1"/>
</dbReference>
<dbReference type="SUPFAM" id="SSF56801">
    <property type="entry name" value="Acetyl-CoA synthetase-like"/>
    <property type="match status" value="1"/>
</dbReference>
<protein>
    <recommendedName>
        <fullName evidence="5">Long-chain-fatty-acid--AMP ligase FadD32</fullName>
        <shortName evidence="5">FAAL</shortName>
        <ecNumber evidence="1">6.2.1.20</ecNumber>
    </recommendedName>
    <alternativeName>
        <fullName evidence="5">Acyl-AMP synthetase</fullName>
    </alternativeName>
</protein>
<reference key="1">
    <citation type="submission" date="2006-10" db="EMBL/GenBank/DDBJ databases">
        <authorList>
            <person name="Fleischmann R.D."/>
            <person name="Dodson R.J."/>
            <person name="Haft D.H."/>
            <person name="Merkel J.S."/>
            <person name="Nelson W.C."/>
            <person name="Fraser C.M."/>
        </authorList>
    </citation>
    <scope>NUCLEOTIDE SEQUENCE [LARGE SCALE GENOMIC DNA]</scope>
    <source>
        <strain>ATCC 700084 / mc(2)155</strain>
    </source>
</reference>
<reference key="2">
    <citation type="journal article" date="2007" name="Genome Biol.">
        <title>Interrupted coding sequences in Mycobacterium smegmatis: authentic mutations or sequencing errors?</title>
        <authorList>
            <person name="Deshayes C."/>
            <person name="Perrodou E."/>
            <person name="Gallien S."/>
            <person name="Euphrasie D."/>
            <person name="Schaeffer C."/>
            <person name="Van-Dorsselaer A."/>
            <person name="Poch O."/>
            <person name="Lecompte O."/>
            <person name="Reyrat J.-M."/>
        </authorList>
    </citation>
    <scope>NUCLEOTIDE SEQUENCE [LARGE SCALE GENOMIC DNA]</scope>
    <source>
        <strain>ATCC 700084 / mc(2)155</strain>
    </source>
</reference>
<reference key="3">
    <citation type="journal article" date="2009" name="Genome Res.">
        <title>Ortho-proteogenomics: multiple proteomes investigation through orthology and a new MS-based protocol.</title>
        <authorList>
            <person name="Gallien S."/>
            <person name="Perrodou E."/>
            <person name="Carapito C."/>
            <person name="Deshayes C."/>
            <person name="Reyrat J.-M."/>
            <person name="Van Dorsselaer A."/>
            <person name="Poch O."/>
            <person name="Schaeffer C."/>
            <person name="Lecompte O."/>
        </authorList>
    </citation>
    <scope>NUCLEOTIDE SEQUENCE [LARGE SCALE GENOMIC DNA]</scope>
    <source>
        <strain>ATCC 700084 / mc(2)155</strain>
    </source>
</reference>
<reference key="4">
    <citation type="journal article" date="2013" name="J. Biomol. Screen.">
        <title>Assay development for identifying inhibitors of the mycobacterial FadD32 activity.</title>
        <authorList>
            <person name="Galandrin S."/>
            <person name="Guillet V."/>
            <person name="Rane R.S."/>
            <person name="Leger M."/>
            <person name="N R."/>
            <person name="Eynard N."/>
            <person name="Das K."/>
            <person name="Balganesh T.S."/>
            <person name="Mourey L."/>
            <person name="Daffe M."/>
            <person name="Marrakchi H."/>
        </authorList>
    </citation>
    <scope>FUNCTION</scope>
    <scope>CATALYTIC ACTIVITY</scope>
    <scope>ACTIVITY REGULATION</scope>
    <scope>BIOPHYSICOCHEMICAL PROPERTIES</scope>
    <source>
        <strain>ATCC 700084 / mc(2)155</strain>
    </source>
</reference>
<reference evidence="8 9" key="5">
    <citation type="journal article" date="2015" name="Sci. Rep.">
        <title>Crystal structure of FadD32, an enzyme essential for mycolic acid biosynthesis in mycobacteria.</title>
        <authorList>
            <person name="Li W."/>
            <person name="Gu S."/>
            <person name="Fleming J."/>
            <person name="Bi L."/>
        </authorList>
    </citation>
    <scope>X-RAY CRYSTALLOGRAPHY (2.25 ANGSTROMS) IN APO FORM AND IN COMPLEX WITH ATP</scope>
    <scope>DOMAIN</scope>
</reference>
<reference evidence="10" key="6">
    <citation type="journal article" date="2016" name="J. Biol. Chem.">
        <title>Insight into structure-function relationships and inhibition of the fatty acyl-AMP ligase (FadD32) orthologs from Mycobacteria.</title>
        <authorList>
            <person name="Guillet V."/>
            <person name="Galandrin S."/>
            <person name="Maveyraud L."/>
            <person name="Ladeveze S."/>
            <person name="Mariaule V."/>
            <person name="Bon C."/>
            <person name="Eynard N."/>
            <person name="Daffe M."/>
            <person name="Marrakchi H."/>
            <person name="Mourey L."/>
        </authorList>
    </citation>
    <scope>X-RAY CRYSTALLOGRAPHY (3.50 ANGSTROMS) IN COMPLEX WITH ALKYL ADENYLATE INHIBITOR AMPC20</scope>
    <scope>FUNCTION</scope>
    <scope>CATALYTIC ACTIVITY</scope>
    <scope>ACTIVITY REGULATION</scope>
    <scope>BIOPHYSICOCHEMICAL PROPERTIES</scope>
    <scope>SUBUNIT</scope>
</reference>
<reference evidence="11" key="7">
    <citation type="submission" date="2016-02" db="PDB data bank">
        <title>2.25 Angstrom resolution crystal structure of fatty-acid-coa ligase (FadD32) from Mycobacterium smegmatis in complex with inhibitor 5'-O-[(11-phenoxyundecanoyl)sulfamoyl]adenosine.</title>
        <authorList>
            <consortium name="Center for Structural Genomics of Infectious Diseases (CSGID)"/>
            <person name="Minasov G."/>
            <person name="Shuvalova L."/>
            <person name="Hung D."/>
            <person name="Fisher S.L."/>
            <person name="Edelstein J."/>
            <person name="Kiryukhina O."/>
            <person name="Dubrovska I."/>
            <person name="Anderson W.F."/>
        </authorList>
    </citation>
    <scope>X-RAY CRYSTALLOGRAPHY (2.25 ANGSTROMS) IN COMPLEX WITH INHIBITOR</scope>
</reference>
<comment type="function">
    <text evidence="1 2 4">Involved in the biosynthesis of mycolic acids (By similarity). Catalyzes the activation of long-chain fatty acids as acyl-adenylates (acyl-AMP), which are then transferred to the phosphopantetheine arm of the polyketide synthase Pks13 for further chain extension (By similarity). Can use decanoate (C10), dodecanoate (C12) and tetradecanoate (C14) (PubMed:23364516, PubMed:26900152).</text>
</comment>
<comment type="catalytic activity">
    <reaction evidence="1">
        <text>a long-chain fatty acid + holo-[ACP] + ATP = a long-chain fatty acyl-[ACP] + AMP + diphosphate</text>
        <dbReference type="Rhea" id="RHEA:45588"/>
        <dbReference type="Rhea" id="RHEA-COMP:9685"/>
        <dbReference type="Rhea" id="RHEA-COMP:12682"/>
        <dbReference type="ChEBI" id="CHEBI:30616"/>
        <dbReference type="ChEBI" id="CHEBI:33019"/>
        <dbReference type="ChEBI" id="CHEBI:57560"/>
        <dbReference type="ChEBI" id="CHEBI:64479"/>
        <dbReference type="ChEBI" id="CHEBI:133243"/>
        <dbReference type="ChEBI" id="CHEBI:456215"/>
        <dbReference type="EC" id="6.2.1.20"/>
    </reaction>
    <physiologicalReaction direction="left-to-right" evidence="1">
        <dbReference type="Rhea" id="RHEA:45589"/>
    </physiologicalReaction>
</comment>
<comment type="catalytic activity">
    <reaction evidence="2">
        <text>decanoate + ATP + H(+) = decanoyl-AMP + diphosphate</text>
        <dbReference type="Rhea" id="RHEA:65008"/>
        <dbReference type="ChEBI" id="CHEBI:15378"/>
        <dbReference type="ChEBI" id="CHEBI:27689"/>
        <dbReference type="ChEBI" id="CHEBI:30616"/>
        <dbReference type="ChEBI" id="CHEBI:33019"/>
        <dbReference type="ChEBI" id="CHEBI:156261"/>
    </reaction>
    <physiologicalReaction direction="left-to-right" evidence="2">
        <dbReference type="Rhea" id="RHEA:65009"/>
    </physiologicalReaction>
</comment>
<comment type="catalytic activity">
    <reaction evidence="2 4">
        <text>dodecanoate + ATP + H(+) = dodecanoyl-AMP + diphosphate</text>
        <dbReference type="Rhea" id="RHEA:43712"/>
        <dbReference type="ChEBI" id="CHEBI:15378"/>
        <dbReference type="ChEBI" id="CHEBI:18262"/>
        <dbReference type="ChEBI" id="CHEBI:30616"/>
        <dbReference type="ChEBI" id="CHEBI:33019"/>
        <dbReference type="ChEBI" id="CHEBI:83623"/>
    </reaction>
    <physiologicalReaction direction="left-to-right" evidence="2 4">
        <dbReference type="Rhea" id="RHEA:43713"/>
    </physiologicalReaction>
</comment>
<comment type="catalytic activity">
    <reaction evidence="2 4">
        <text>tetradecanoate + ATP + H(+) = tetradecanoyl-AMP + diphosphate</text>
        <dbReference type="Rhea" id="RHEA:43704"/>
        <dbReference type="ChEBI" id="CHEBI:15378"/>
        <dbReference type="ChEBI" id="CHEBI:30616"/>
        <dbReference type="ChEBI" id="CHEBI:30807"/>
        <dbReference type="ChEBI" id="CHEBI:33019"/>
        <dbReference type="ChEBI" id="CHEBI:83626"/>
    </reaction>
    <physiologicalReaction direction="left-to-right" evidence="2 4">
        <dbReference type="Rhea" id="RHEA:43705"/>
    </physiologicalReaction>
</comment>
<comment type="activity regulation">
    <text evidence="2 4">The acyl-AMP ligase activity is inhibited by the alkylphosphate ester of AMP, adenosine 50-dodecylphosphate (AMPC12) (PubMed:23364516, PubMed:26900152). Also inhibited by eicosyl-AMP (AMPC20) (PubMed:26900152).</text>
</comment>
<comment type="biophysicochemical properties">
    <kinetics>
        <KM evidence="2">259 uM for decanoate</KM>
        <KM evidence="2">25.9 uM for dodecanoate</KM>
        <KM evidence="2">5.2 uM for tetradecanoate</KM>
        <KM evidence="2">76 uM for ATP</KM>
        <KM evidence="4">112 uM for ATP</KM>
        <text evidence="2">kcat is 16.1 min(-1) with decanoate as substrate (PubMed:23364516). kcat is 11.2 min(-1) with dodecanoate as substrate (PubMed:23364516). kcat is 4.2 min(-1) with tetradecanoate as substrate (PubMed:23364516).</text>
    </kinetics>
    <phDependence>
        <text evidence="2">Optimum pH is 7.5.</text>
    </phDependence>
</comment>
<comment type="pathway">
    <text evidence="1">Lipid metabolism; mycolic acid biosynthesis.</text>
</comment>
<comment type="subunit">
    <text evidence="4">Monomer.</text>
</comment>
<comment type="domain">
    <text evidence="3">Consists of two globular domains connected by a flexible linker. ATP binds in a cleft at the interface between the N- and C-terminal domains and its binding induces significant local conformational changes.</text>
</comment>
<comment type="similarity">
    <text evidence="5">Belongs to the ATP-dependent AMP-binding enzyme family.</text>
</comment>